<proteinExistence type="inferred from homology"/>
<name>ATPE_YERPS</name>
<accession>Q663Q9</accession>
<gene>
    <name evidence="1" type="primary">atpC</name>
    <name type="ordered locus">YPTB3966</name>
</gene>
<evidence type="ECO:0000255" key="1">
    <source>
        <dbReference type="HAMAP-Rule" id="MF_00530"/>
    </source>
</evidence>
<organism>
    <name type="scientific">Yersinia pseudotuberculosis serotype I (strain IP32953)</name>
    <dbReference type="NCBI Taxonomy" id="273123"/>
    <lineage>
        <taxon>Bacteria</taxon>
        <taxon>Pseudomonadati</taxon>
        <taxon>Pseudomonadota</taxon>
        <taxon>Gammaproteobacteria</taxon>
        <taxon>Enterobacterales</taxon>
        <taxon>Yersiniaceae</taxon>
        <taxon>Yersinia</taxon>
    </lineage>
</organism>
<protein>
    <recommendedName>
        <fullName evidence="1">ATP synthase epsilon chain</fullName>
    </recommendedName>
    <alternativeName>
        <fullName evidence="1">ATP synthase F1 sector epsilon subunit</fullName>
    </alternativeName>
    <alternativeName>
        <fullName evidence="1">F-ATPase epsilon subunit</fullName>
    </alternativeName>
</protein>
<comment type="function">
    <text evidence="1">Produces ATP from ADP in the presence of a proton gradient across the membrane.</text>
</comment>
<comment type="subunit">
    <text>F-type ATPases have 2 components, CF(1) - the catalytic core - and CF(0) - the membrane proton channel. CF(1) has five subunits: alpha(3), beta(3), gamma(1), delta(1), epsilon(1). CF(0) has three main subunits: a, b and c.</text>
</comment>
<comment type="subcellular location">
    <subcellularLocation>
        <location evidence="1">Cell inner membrane</location>
        <topology evidence="1">Peripheral membrane protein</topology>
    </subcellularLocation>
</comment>
<comment type="similarity">
    <text evidence="1">Belongs to the ATPase epsilon chain family.</text>
</comment>
<feature type="chain" id="PRO_0000188247" description="ATP synthase epsilon chain">
    <location>
        <begin position="1"/>
        <end position="137"/>
    </location>
</feature>
<keyword id="KW-0066">ATP synthesis</keyword>
<keyword id="KW-0997">Cell inner membrane</keyword>
<keyword id="KW-1003">Cell membrane</keyword>
<keyword id="KW-0139">CF(1)</keyword>
<keyword id="KW-0375">Hydrogen ion transport</keyword>
<keyword id="KW-0406">Ion transport</keyword>
<keyword id="KW-0472">Membrane</keyword>
<keyword id="KW-0813">Transport</keyword>
<sequence length="137" mass="14843">MTYHLDVVSAEKKMFSGVVQKIQVTGSEGELGIFPGHAPLLTAIKPGMIRIVKQFGEEEFIYLSGGILEVQPSVVIVLADTAIRGLDLDEARALESKRKAEAHINNSHGDVDYAQASAELAKAIAKLRVIELTKKAM</sequence>
<reference key="1">
    <citation type="journal article" date="2004" name="Proc. Natl. Acad. Sci. U.S.A.">
        <title>Insights into the evolution of Yersinia pestis through whole-genome comparison with Yersinia pseudotuberculosis.</title>
        <authorList>
            <person name="Chain P.S.G."/>
            <person name="Carniel E."/>
            <person name="Larimer F.W."/>
            <person name="Lamerdin J."/>
            <person name="Stoutland P.O."/>
            <person name="Regala W.M."/>
            <person name="Georgescu A.M."/>
            <person name="Vergez L.M."/>
            <person name="Land M.L."/>
            <person name="Motin V.L."/>
            <person name="Brubaker R.R."/>
            <person name="Fowler J."/>
            <person name="Hinnebusch J."/>
            <person name="Marceau M."/>
            <person name="Medigue C."/>
            <person name="Simonet M."/>
            <person name="Chenal-Francisque V."/>
            <person name="Souza B."/>
            <person name="Dacheux D."/>
            <person name="Elliott J.M."/>
            <person name="Derbise A."/>
            <person name="Hauser L.J."/>
            <person name="Garcia E."/>
        </authorList>
    </citation>
    <scope>NUCLEOTIDE SEQUENCE [LARGE SCALE GENOMIC DNA]</scope>
    <source>
        <strain>IP32953</strain>
    </source>
</reference>
<dbReference type="EMBL" id="BX936398">
    <property type="protein sequence ID" value="CAH23204.1"/>
    <property type="molecule type" value="Genomic_DNA"/>
</dbReference>
<dbReference type="SMR" id="Q663Q9"/>
<dbReference type="KEGG" id="yps:YPTB3966"/>
<dbReference type="Proteomes" id="UP000001011">
    <property type="component" value="Chromosome"/>
</dbReference>
<dbReference type="GO" id="GO:0005886">
    <property type="term" value="C:plasma membrane"/>
    <property type="evidence" value="ECO:0007669"/>
    <property type="project" value="UniProtKB-SubCell"/>
</dbReference>
<dbReference type="GO" id="GO:0045259">
    <property type="term" value="C:proton-transporting ATP synthase complex"/>
    <property type="evidence" value="ECO:0007669"/>
    <property type="project" value="UniProtKB-KW"/>
</dbReference>
<dbReference type="GO" id="GO:0005524">
    <property type="term" value="F:ATP binding"/>
    <property type="evidence" value="ECO:0007669"/>
    <property type="project" value="UniProtKB-UniRule"/>
</dbReference>
<dbReference type="GO" id="GO:0046933">
    <property type="term" value="F:proton-transporting ATP synthase activity, rotational mechanism"/>
    <property type="evidence" value="ECO:0007669"/>
    <property type="project" value="UniProtKB-UniRule"/>
</dbReference>
<dbReference type="CDD" id="cd12152">
    <property type="entry name" value="F1-ATPase_delta"/>
    <property type="match status" value="1"/>
</dbReference>
<dbReference type="FunFam" id="1.20.5.440:FF:000001">
    <property type="entry name" value="ATP synthase epsilon chain"/>
    <property type="match status" value="1"/>
</dbReference>
<dbReference type="FunFam" id="2.60.15.10:FF:000001">
    <property type="entry name" value="ATP synthase epsilon chain"/>
    <property type="match status" value="1"/>
</dbReference>
<dbReference type="Gene3D" id="1.20.5.440">
    <property type="entry name" value="ATP synthase delta/epsilon subunit, C-terminal domain"/>
    <property type="match status" value="1"/>
</dbReference>
<dbReference type="Gene3D" id="2.60.15.10">
    <property type="entry name" value="F0F1 ATP synthase delta/epsilon subunit, N-terminal"/>
    <property type="match status" value="1"/>
</dbReference>
<dbReference type="HAMAP" id="MF_00530">
    <property type="entry name" value="ATP_synth_epsil_bac"/>
    <property type="match status" value="1"/>
</dbReference>
<dbReference type="InterPro" id="IPR036794">
    <property type="entry name" value="ATP_F1_dsu/esu_C_sf"/>
</dbReference>
<dbReference type="InterPro" id="IPR001469">
    <property type="entry name" value="ATP_synth_F1_dsu/esu"/>
</dbReference>
<dbReference type="InterPro" id="IPR020546">
    <property type="entry name" value="ATP_synth_F1_dsu/esu_N"/>
</dbReference>
<dbReference type="InterPro" id="IPR020547">
    <property type="entry name" value="ATP_synth_F1_esu_C"/>
</dbReference>
<dbReference type="InterPro" id="IPR036771">
    <property type="entry name" value="ATPsynth_dsu/esu_N"/>
</dbReference>
<dbReference type="NCBIfam" id="TIGR01216">
    <property type="entry name" value="ATP_synt_epsi"/>
    <property type="match status" value="1"/>
</dbReference>
<dbReference type="NCBIfam" id="NF001847">
    <property type="entry name" value="PRK00571.1-4"/>
    <property type="match status" value="1"/>
</dbReference>
<dbReference type="PANTHER" id="PTHR13822">
    <property type="entry name" value="ATP SYNTHASE DELTA/EPSILON CHAIN"/>
    <property type="match status" value="1"/>
</dbReference>
<dbReference type="PANTHER" id="PTHR13822:SF10">
    <property type="entry name" value="ATP SYNTHASE EPSILON CHAIN, CHLOROPLASTIC"/>
    <property type="match status" value="1"/>
</dbReference>
<dbReference type="Pfam" id="PF00401">
    <property type="entry name" value="ATP-synt_DE"/>
    <property type="match status" value="1"/>
</dbReference>
<dbReference type="Pfam" id="PF02823">
    <property type="entry name" value="ATP-synt_DE_N"/>
    <property type="match status" value="1"/>
</dbReference>
<dbReference type="SUPFAM" id="SSF46604">
    <property type="entry name" value="Epsilon subunit of F1F0-ATP synthase C-terminal domain"/>
    <property type="match status" value="1"/>
</dbReference>
<dbReference type="SUPFAM" id="SSF51344">
    <property type="entry name" value="Epsilon subunit of F1F0-ATP synthase N-terminal domain"/>
    <property type="match status" value="1"/>
</dbReference>